<protein>
    <recommendedName>
        <fullName>60 kDa lysophospholipase</fullName>
        <ecNumber evidence="2">3.1.1.5</ecNumber>
    </recommendedName>
    <alternativeName>
        <fullName evidence="2">Lysophospholipase-transacylase</fullName>
    </alternativeName>
    <domain>
        <recommendedName>
            <fullName>L-asparaginase</fullName>
            <ecNumber evidence="2">3.5.1.1</ecNumber>
        </recommendedName>
        <alternativeName>
            <fullName>L-asparagine amidohydrolase</fullName>
        </alternativeName>
    </domain>
    <domain>
        <recommendedName>
            <fullName>1-alkyl-2-acetylglycerophosphocholine esterase</fullName>
            <ecNumber evidence="2">3.1.1.47</ecNumber>
        </recommendedName>
        <alternativeName>
            <fullName>Platelet-activating factor acetylhydrolase</fullName>
            <shortName>PAF acetylhydrolase</shortName>
        </alternativeName>
    </domain>
</protein>
<keyword id="KW-0012">Acyltransferase</keyword>
<keyword id="KW-0040">ANK repeat</keyword>
<keyword id="KW-0378">Hydrolase</keyword>
<keyword id="KW-0442">Lipid degradation</keyword>
<keyword id="KW-0443">Lipid metabolism</keyword>
<keyword id="KW-0597">Phosphoprotein</keyword>
<keyword id="KW-1185">Reference proteome</keyword>
<keyword id="KW-0677">Repeat</keyword>
<keyword id="KW-0808">Transferase</keyword>
<dbReference type="EC" id="3.1.1.5" evidence="2"/>
<dbReference type="EC" id="3.5.1.1" evidence="2"/>
<dbReference type="EC" id="3.1.1.47" evidence="2"/>
<dbReference type="EMBL" id="BC126962">
    <property type="protein sequence ID" value="AAI26963.1"/>
    <property type="molecule type" value="mRNA"/>
</dbReference>
<dbReference type="CCDS" id="CCDS36567.1"/>
<dbReference type="RefSeq" id="NP_001074638.1">
    <property type="nucleotide sequence ID" value="NM_001081169.1"/>
</dbReference>
<dbReference type="SMR" id="A0JNU3"/>
<dbReference type="BioGRID" id="222710">
    <property type="interactions" value="1"/>
</dbReference>
<dbReference type="FunCoup" id="A0JNU3">
    <property type="interactions" value="5"/>
</dbReference>
<dbReference type="STRING" id="10090.ENSMUSP00000078369"/>
<dbReference type="GlyGen" id="A0JNU3">
    <property type="glycosylation" value="1 site"/>
</dbReference>
<dbReference type="iPTMnet" id="A0JNU3"/>
<dbReference type="PhosphoSitePlus" id="A0JNU3"/>
<dbReference type="SwissPalm" id="A0JNU3"/>
<dbReference type="jPOST" id="A0JNU3"/>
<dbReference type="PaxDb" id="10090-ENSMUSP00000078369"/>
<dbReference type="ProteomicsDB" id="292024"/>
<dbReference type="Antibodypedia" id="59083">
    <property type="antibodies" value="58 antibodies from 13 providers"/>
</dbReference>
<dbReference type="Ensembl" id="ENSMUST00000079400.6">
    <property type="protein sequence ID" value="ENSMUSP00000078369.5"/>
    <property type="gene ID" value="ENSMUSG00000037686.7"/>
</dbReference>
<dbReference type="GeneID" id="104816"/>
<dbReference type="KEGG" id="mmu:104816"/>
<dbReference type="UCSC" id="uc007pek.1">
    <property type="organism name" value="mouse"/>
</dbReference>
<dbReference type="AGR" id="MGI:2144822"/>
<dbReference type="CTD" id="374569"/>
<dbReference type="MGI" id="MGI:2144822">
    <property type="gene designation" value="Aspg"/>
</dbReference>
<dbReference type="VEuPathDB" id="HostDB:ENSMUSG00000037686"/>
<dbReference type="eggNOG" id="KOG0503">
    <property type="taxonomic scope" value="Eukaryota"/>
</dbReference>
<dbReference type="GeneTree" id="ENSGT00390000001610"/>
<dbReference type="HOGENOM" id="CLU_019134_3_0_1"/>
<dbReference type="InParanoid" id="A0JNU3"/>
<dbReference type="OMA" id="EWDLANK"/>
<dbReference type="OrthoDB" id="542841at2759"/>
<dbReference type="PhylomeDB" id="A0JNU3"/>
<dbReference type="TreeFam" id="TF315247"/>
<dbReference type="BRENDA" id="3.1.1.47">
    <property type="organism ID" value="3474"/>
</dbReference>
<dbReference type="Reactome" id="R-MMU-8963693">
    <property type="pathway name" value="Aspartate and asparagine metabolism"/>
</dbReference>
<dbReference type="BioGRID-ORCS" id="104816">
    <property type="hits" value="2 hits in 76 CRISPR screens"/>
</dbReference>
<dbReference type="ChiTaRS" id="Aspg">
    <property type="organism name" value="mouse"/>
</dbReference>
<dbReference type="PRO" id="PR:A0JNU3"/>
<dbReference type="Proteomes" id="UP000000589">
    <property type="component" value="Chromosome 12"/>
</dbReference>
<dbReference type="RNAct" id="A0JNU3">
    <property type="molecule type" value="protein"/>
</dbReference>
<dbReference type="Bgee" id="ENSMUSG00000037686">
    <property type="expression patterns" value="Expressed in gastrula and 90 other cell types or tissues"/>
</dbReference>
<dbReference type="ExpressionAtlas" id="A0JNU3">
    <property type="expression patterns" value="baseline and differential"/>
</dbReference>
<dbReference type="GO" id="GO:0003847">
    <property type="term" value="F:1-alkyl-2-acetylglycerophosphocholine esterase activity"/>
    <property type="evidence" value="ECO:0007669"/>
    <property type="project" value="UniProtKB-EC"/>
</dbReference>
<dbReference type="GO" id="GO:0016747">
    <property type="term" value="F:acyltransferase activity, transferring groups other than amino-acyl groups"/>
    <property type="evidence" value="ECO:0000250"/>
    <property type="project" value="UniProtKB"/>
</dbReference>
<dbReference type="GO" id="GO:0004067">
    <property type="term" value="F:asparaginase activity"/>
    <property type="evidence" value="ECO:0007669"/>
    <property type="project" value="UniProtKB-EC"/>
</dbReference>
<dbReference type="GO" id="GO:0004622">
    <property type="term" value="F:lysophospholipase activity"/>
    <property type="evidence" value="ECO:0000250"/>
    <property type="project" value="UniProtKB"/>
</dbReference>
<dbReference type="GO" id="GO:0009066">
    <property type="term" value="P:aspartate family amino acid metabolic process"/>
    <property type="evidence" value="ECO:0007669"/>
    <property type="project" value="UniProtKB-ARBA"/>
</dbReference>
<dbReference type="GO" id="GO:0016042">
    <property type="term" value="P:lipid catabolic process"/>
    <property type="evidence" value="ECO:0007669"/>
    <property type="project" value="UniProtKB-KW"/>
</dbReference>
<dbReference type="CDD" id="cd08963">
    <property type="entry name" value="L-asparaginase_I"/>
    <property type="match status" value="1"/>
</dbReference>
<dbReference type="FunFam" id="3.40.50.1170:FF:000003">
    <property type="entry name" value="60 kDa lysophospholipase"/>
    <property type="match status" value="1"/>
</dbReference>
<dbReference type="FunFam" id="1.25.40.20:FF:000265">
    <property type="entry name" value="ASPG isoform 1"/>
    <property type="match status" value="1"/>
</dbReference>
<dbReference type="FunFam" id="3.40.50.40:FF:000001">
    <property type="entry name" value="L-asparaginase 1"/>
    <property type="match status" value="1"/>
</dbReference>
<dbReference type="Gene3D" id="3.40.50.40">
    <property type="match status" value="1"/>
</dbReference>
<dbReference type="Gene3D" id="1.25.40.20">
    <property type="entry name" value="Ankyrin repeat-containing domain"/>
    <property type="match status" value="2"/>
</dbReference>
<dbReference type="Gene3D" id="3.40.50.1170">
    <property type="entry name" value="L-asparaginase, N-terminal domain"/>
    <property type="match status" value="1"/>
</dbReference>
<dbReference type="InterPro" id="IPR002110">
    <property type="entry name" value="Ankyrin_rpt"/>
</dbReference>
<dbReference type="InterPro" id="IPR036770">
    <property type="entry name" value="Ankyrin_rpt-contain_sf"/>
</dbReference>
<dbReference type="InterPro" id="IPR006033">
    <property type="entry name" value="AsnA_fam"/>
</dbReference>
<dbReference type="InterPro" id="IPR036152">
    <property type="entry name" value="Asp/glu_Ase-like_sf"/>
</dbReference>
<dbReference type="InterPro" id="IPR006034">
    <property type="entry name" value="Asparaginase/glutaminase-like"/>
</dbReference>
<dbReference type="InterPro" id="IPR027475">
    <property type="entry name" value="Asparaginase/glutaminase_AS2"/>
</dbReference>
<dbReference type="InterPro" id="IPR040919">
    <property type="entry name" value="Asparaginase_C"/>
</dbReference>
<dbReference type="InterPro" id="IPR027473">
    <property type="entry name" value="L-asparaginase_C"/>
</dbReference>
<dbReference type="InterPro" id="IPR041725">
    <property type="entry name" value="L-asparaginase_I"/>
</dbReference>
<dbReference type="InterPro" id="IPR027474">
    <property type="entry name" value="L-asparaginase_N"/>
</dbReference>
<dbReference type="InterPro" id="IPR037152">
    <property type="entry name" value="L-asparaginase_N_sf"/>
</dbReference>
<dbReference type="NCBIfam" id="TIGR00519">
    <property type="entry name" value="asnASE_I"/>
    <property type="match status" value="1"/>
</dbReference>
<dbReference type="PANTHER" id="PTHR11707:SF28">
    <property type="entry name" value="60 KDA LYSOPHOSPHOLIPASE"/>
    <property type="match status" value="1"/>
</dbReference>
<dbReference type="PANTHER" id="PTHR11707">
    <property type="entry name" value="L-ASPARAGINASE"/>
    <property type="match status" value="1"/>
</dbReference>
<dbReference type="Pfam" id="PF12796">
    <property type="entry name" value="Ank_2"/>
    <property type="match status" value="1"/>
</dbReference>
<dbReference type="Pfam" id="PF00710">
    <property type="entry name" value="Asparaginase"/>
    <property type="match status" value="1"/>
</dbReference>
<dbReference type="Pfam" id="PF17763">
    <property type="entry name" value="Asparaginase_C"/>
    <property type="match status" value="1"/>
</dbReference>
<dbReference type="PIRSF" id="PIRSF001220">
    <property type="entry name" value="L-ASNase_gatD"/>
    <property type="match status" value="1"/>
</dbReference>
<dbReference type="PIRSF" id="PIRSF500176">
    <property type="entry name" value="L_ASNase"/>
    <property type="match status" value="1"/>
</dbReference>
<dbReference type="PRINTS" id="PR00139">
    <property type="entry name" value="ASNGLNASE"/>
</dbReference>
<dbReference type="SFLD" id="SFLDS00057">
    <property type="entry name" value="Glutaminase/Asparaginase"/>
    <property type="match status" value="1"/>
</dbReference>
<dbReference type="SMART" id="SM00248">
    <property type="entry name" value="ANK"/>
    <property type="match status" value="4"/>
</dbReference>
<dbReference type="SMART" id="SM00870">
    <property type="entry name" value="Asparaginase"/>
    <property type="match status" value="1"/>
</dbReference>
<dbReference type="SUPFAM" id="SSF48403">
    <property type="entry name" value="Ankyrin repeat"/>
    <property type="match status" value="1"/>
</dbReference>
<dbReference type="SUPFAM" id="SSF53774">
    <property type="entry name" value="Glutaminase/Asparaginase"/>
    <property type="match status" value="1"/>
</dbReference>
<dbReference type="PROSITE" id="PS50297">
    <property type="entry name" value="ANK_REP_REGION"/>
    <property type="match status" value="1"/>
</dbReference>
<dbReference type="PROSITE" id="PS50088">
    <property type="entry name" value="ANK_REPEAT"/>
    <property type="match status" value="2"/>
</dbReference>
<dbReference type="PROSITE" id="PS00917">
    <property type="entry name" value="ASN_GLN_ASE_2"/>
    <property type="match status" value="1"/>
</dbReference>
<dbReference type="PROSITE" id="PS51732">
    <property type="entry name" value="ASN_GLN_ASE_3"/>
    <property type="match status" value="1"/>
</dbReference>
<accession>A0JNU3</accession>
<comment type="function">
    <text evidence="2">Exhibits lysophospholipase, transacylase, PAF acetylhydrolase and asparaginase activities (By similarity). Can catalyze three types of transacylation reactions: (1) acyl transfer from 1-acyl-sn-glycero-3-phosphocholine (1-acyl-GPC) to the sn-1(3) positions of glycerol and 2-acylglycerol (sn-1 to -1(3) transfer), (2) acyl transfer from 1-acyl-GPC to the sn-2 positions of 1-acyl-GPC, 1-acyl-sn-glycero-3-phosphoethanolamine (1-acyl-GPE), and other lysophospholipids (sn-1 to -2 transfer) and (3) acyl transfer from 2-acyl-GPC to the sn-1 position of 2-acyl-GPC and 2-acyl-GPE (sn-2 to -1 transfer) (By similarity). Mediates the synthesis of 1-arachidonoyl species of phospholipids by transferring the arachidonoyl residue from 2-arachidonoyl lysophospholipid to the sn-1 position of 2-acyl lysophospholipid (By similarity).</text>
</comment>
<comment type="catalytic activity">
    <reaction evidence="2">
        <text>a 1-acyl-sn-glycero-3-phosphocholine + H2O = sn-glycerol 3-phosphocholine + a fatty acid + H(+)</text>
        <dbReference type="Rhea" id="RHEA:15177"/>
        <dbReference type="ChEBI" id="CHEBI:15377"/>
        <dbReference type="ChEBI" id="CHEBI:15378"/>
        <dbReference type="ChEBI" id="CHEBI:16870"/>
        <dbReference type="ChEBI" id="CHEBI:28868"/>
        <dbReference type="ChEBI" id="CHEBI:58168"/>
        <dbReference type="EC" id="3.1.1.5"/>
    </reaction>
    <physiologicalReaction direction="left-to-right" evidence="2">
        <dbReference type="Rhea" id="RHEA:15178"/>
    </physiologicalReaction>
</comment>
<comment type="catalytic activity">
    <reaction evidence="2">
        <text>L-asparagine + H2O = L-aspartate + NH4(+)</text>
        <dbReference type="Rhea" id="RHEA:21016"/>
        <dbReference type="ChEBI" id="CHEBI:15377"/>
        <dbReference type="ChEBI" id="CHEBI:28938"/>
        <dbReference type="ChEBI" id="CHEBI:29991"/>
        <dbReference type="ChEBI" id="CHEBI:58048"/>
        <dbReference type="EC" id="3.5.1.1"/>
    </reaction>
    <physiologicalReaction direction="left-to-right" evidence="2">
        <dbReference type="Rhea" id="RHEA:21017"/>
    </physiologicalReaction>
</comment>
<comment type="catalytic activity">
    <reaction evidence="2">
        <text>a 1-O-alkyl-2-acetyl-sn-glycero-3-phosphocholine + H2O = a 1-O-alkyl-sn-glycero-3-phosphocholine + acetate + H(+)</text>
        <dbReference type="Rhea" id="RHEA:17777"/>
        <dbReference type="ChEBI" id="CHEBI:15377"/>
        <dbReference type="ChEBI" id="CHEBI:15378"/>
        <dbReference type="ChEBI" id="CHEBI:30089"/>
        <dbReference type="ChEBI" id="CHEBI:30909"/>
        <dbReference type="ChEBI" id="CHEBI:36707"/>
        <dbReference type="EC" id="3.1.1.47"/>
    </reaction>
    <physiologicalReaction direction="left-to-right" evidence="2">
        <dbReference type="Rhea" id="RHEA:17778"/>
    </physiologicalReaction>
</comment>
<comment type="catalytic activity">
    <reaction evidence="2">
        <text>1-hexadecanoyl-sn-glycero-3-phosphocholine + H2O = sn-glycerol 3-phosphocholine + hexadecanoate + H(+)</text>
        <dbReference type="Rhea" id="RHEA:40435"/>
        <dbReference type="ChEBI" id="CHEBI:7896"/>
        <dbReference type="ChEBI" id="CHEBI:15377"/>
        <dbReference type="ChEBI" id="CHEBI:15378"/>
        <dbReference type="ChEBI" id="CHEBI:16870"/>
        <dbReference type="ChEBI" id="CHEBI:72998"/>
    </reaction>
    <physiologicalReaction direction="left-to-right" evidence="2">
        <dbReference type="Rhea" id="RHEA:40436"/>
    </physiologicalReaction>
</comment>
<comment type="catalytic activity">
    <reaction evidence="2">
        <text>2 1-hexadecanoyl-sn-glycero-3-phosphocholine = 1,2-dihexadecanoyl-sn-glycero-3-phosphocholine + sn-glycerol 3-phosphocholine</text>
        <dbReference type="Rhea" id="RHEA:40879"/>
        <dbReference type="ChEBI" id="CHEBI:16870"/>
        <dbReference type="ChEBI" id="CHEBI:72998"/>
        <dbReference type="ChEBI" id="CHEBI:72999"/>
    </reaction>
    <physiologicalReaction direction="left-to-right" evidence="2">
        <dbReference type="Rhea" id="RHEA:40880"/>
    </physiologicalReaction>
</comment>
<comment type="catalytic activity">
    <reaction evidence="2">
        <text>1-octadecanoyl-sn-glycero-3-phosphocholine + H2O = octadecanoate + sn-glycerol 3-phosphocholine + H(+)</text>
        <dbReference type="Rhea" id="RHEA:40887"/>
        <dbReference type="ChEBI" id="CHEBI:15377"/>
        <dbReference type="ChEBI" id="CHEBI:15378"/>
        <dbReference type="ChEBI" id="CHEBI:16870"/>
        <dbReference type="ChEBI" id="CHEBI:25629"/>
        <dbReference type="ChEBI" id="CHEBI:73858"/>
    </reaction>
    <physiologicalReaction direction="left-to-right" evidence="2">
        <dbReference type="Rhea" id="RHEA:40888"/>
    </physiologicalReaction>
</comment>
<comment type="catalytic activity">
    <reaction evidence="2">
        <text>1-(9Z-octadecenoyl)-sn-glycero-3-phosphocholine + H2O = sn-glycerol 3-phosphocholine + (9Z)-octadecenoate + H(+)</text>
        <dbReference type="Rhea" id="RHEA:40807"/>
        <dbReference type="ChEBI" id="CHEBI:15377"/>
        <dbReference type="ChEBI" id="CHEBI:15378"/>
        <dbReference type="ChEBI" id="CHEBI:16870"/>
        <dbReference type="ChEBI" id="CHEBI:28610"/>
        <dbReference type="ChEBI" id="CHEBI:30823"/>
    </reaction>
    <physiologicalReaction direction="left-to-right" evidence="2">
        <dbReference type="Rhea" id="RHEA:40808"/>
    </physiologicalReaction>
</comment>
<comment type="catalytic activity">
    <reaction evidence="2">
        <text>1-hexadecanoyl-sn-glycero-3-phosphoethanolamine + H2O = sn-glycero-3-phosphoethanolamine + hexadecanoate + H(+)</text>
        <dbReference type="Rhea" id="RHEA:40891"/>
        <dbReference type="ChEBI" id="CHEBI:7896"/>
        <dbReference type="ChEBI" id="CHEBI:15377"/>
        <dbReference type="ChEBI" id="CHEBI:15378"/>
        <dbReference type="ChEBI" id="CHEBI:73004"/>
        <dbReference type="ChEBI" id="CHEBI:143890"/>
    </reaction>
    <physiologicalReaction direction="left-to-right" evidence="2">
        <dbReference type="Rhea" id="RHEA:40892"/>
    </physiologicalReaction>
</comment>
<comment type="catalytic activity">
    <reaction evidence="2">
        <text>1-(9Z-octadecenoyl)-sn-glycero-3-phosphoethanolamine + H2O = sn-glycero-3-phosphoethanolamine + (9Z)-octadecenoate + H(+)</text>
        <dbReference type="Rhea" id="RHEA:40895"/>
        <dbReference type="ChEBI" id="CHEBI:15377"/>
        <dbReference type="ChEBI" id="CHEBI:15378"/>
        <dbReference type="ChEBI" id="CHEBI:30823"/>
        <dbReference type="ChEBI" id="CHEBI:74971"/>
        <dbReference type="ChEBI" id="CHEBI:143890"/>
    </reaction>
    <physiologicalReaction direction="left-to-right" evidence="2">
        <dbReference type="Rhea" id="RHEA:40896"/>
    </physiologicalReaction>
</comment>
<comment type="catalytic activity">
    <reaction evidence="2">
        <text>1-hexadecanoyl-sn-glycero-3-phosphoethanolamine + 1-hexadecanoyl-sn-glycero-3-phosphocholine = 1,2-dihexadecanoyl-sn-glycero-3-phosphoethanolamine + sn-glycerol 3-phosphocholine</text>
        <dbReference type="Rhea" id="RHEA:40899"/>
        <dbReference type="ChEBI" id="CHEBI:16870"/>
        <dbReference type="ChEBI" id="CHEBI:72998"/>
        <dbReference type="ChEBI" id="CHEBI:73004"/>
        <dbReference type="ChEBI" id="CHEBI:73005"/>
    </reaction>
    <physiologicalReaction direction="left-to-right" evidence="2">
        <dbReference type="Rhea" id="RHEA:40900"/>
    </physiologicalReaction>
</comment>
<comment type="catalytic activity">
    <reaction evidence="2">
        <text>2-(5Z,8Z,11Z,14Z)-eicosatetraenoyl-sn-glycero-3-phosphocholine + H2O = sn-glycerol 3-phosphocholine + (5Z,8Z,11Z,14Z)-eicosatetraenoate + H(+)</text>
        <dbReference type="Rhea" id="RHEA:40827"/>
        <dbReference type="ChEBI" id="CHEBI:15377"/>
        <dbReference type="ChEBI" id="CHEBI:15378"/>
        <dbReference type="ChEBI" id="CHEBI:16870"/>
        <dbReference type="ChEBI" id="CHEBI:32395"/>
        <dbReference type="ChEBI" id="CHEBI:76079"/>
    </reaction>
    <physiologicalReaction direction="left-to-right" evidence="2">
        <dbReference type="Rhea" id="RHEA:40828"/>
    </physiologicalReaction>
</comment>
<comment type="catalytic activity">
    <reaction evidence="2">
        <text>2-hexadecanoyl-sn-glycero-3-phosphocholine + H2O = sn-glycerol 3-phosphocholine + hexadecanoate + H(+)</text>
        <dbReference type="Rhea" id="RHEA:40903"/>
        <dbReference type="ChEBI" id="CHEBI:7896"/>
        <dbReference type="ChEBI" id="CHEBI:15377"/>
        <dbReference type="ChEBI" id="CHEBI:15378"/>
        <dbReference type="ChEBI" id="CHEBI:16870"/>
        <dbReference type="ChEBI" id="CHEBI:76078"/>
    </reaction>
    <physiologicalReaction direction="left-to-right" evidence="2">
        <dbReference type="Rhea" id="RHEA:40904"/>
    </physiologicalReaction>
</comment>
<comment type="catalytic activity">
    <reaction evidence="2">
        <text>2 2-hexadecanoyl-sn-glycero-3-phosphocholine = 1,2-dihexadecanoyl-sn-glycero-3-phosphocholine + sn-glycerol 3-phosphocholine</text>
        <dbReference type="Rhea" id="RHEA:40907"/>
        <dbReference type="ChEBI" id="CHEBI:16870"/>
        <dbReference type="ChEBI" id="CHEBI:72999"/>
        <dbReference type="ChEBI" id="CHEBI:76078"/>
    </reaction>
    <physiologicalReaction direction="left-to-right" evidence="2">
        <dbReference type="Rhea" id="RHEA:40908"/>
    </physiologicalReaction>
</comment>
<comment type="catalytic activity">
    <reaction evidence="2">
        <text>1-O-(9Z)-octadecenoyl-2-O-acetyl-sn-glycero-3-phosphocholine + H2O = 2-acetyl-sn-glycero-3-phosphocholine + (9Z)-octadecenoate + H(+)</text>
        <dbReference type="Rhea" id="RHEA:41320"/>
        <dbReference type="ChEBI" id="CHEBI:15377"/>
        <dbReference type="ChEBI" id="CHEBI:15378"/>
        <dbReference type="ChEBI" id="CHEBI:30823"/>
        <dbReference type="ChEBI" id="CHEBI:78044"/>
        <dbReference type="ChEBI" id="CHEBI:78045"/>
    </reaction>
    <physiologicalReaction direction="left-to-right" evidence="2">
        <dbReference type="Rhea" id="RHEA:41321"/>
    </physiologicalReaction>
</comment>
<comment type="catalytic activity">
    <reaction evidence="2">
        <text>a 1-acyl-sn-glycero-3-phospho-(1D-myo-inositol) + 1-hexadecanoyl-sn-glycero-3-phosphocholine = a 1-acyl-2-hexadecanoyl-sn-glycero-3-phospho-(1D-myo-inositol) + sn-glycerol 3-phosphocholine</text>
        <dbReference type="Rhea" id="RHEA:41352"/>
        <dbReference type="ChEBI" id="CHEBI:16870"/>
        <dbReference type="ChEBI" id="CHEBI:64771"/>
        <dbReference type="ChEBI" id="CHEBI:64874"/>
        <dbReference type="ChEBI" id="CHEBI:72998"/>
    </reaction>
    <physiologicalReaction direction="left-to-right" evidence="2">
        <dbReference type="Rhea" id="RHEA:41353"/>
    </physiologicalReaction>
</comment>
<comment type="catalytic activity">
    <reaction evidence="2">
        <text>2 2-(5Z,8Z,11Z,14Z)-eicosatetraenoyl-sn-glycero-3-phosphocholine = 1,2-di-(5Z,8Z,11Z,14Z-eicosatetraenoyl)-sn-glycero-3-phosphocholine + sn-glycerol 3-phosphocholine</text>
        <dbReference type="Rhea" id="RHEA:40959"/>
        <dbReference type="ChEBI" id="CHEBI:16870"/>
        <dbReference type="ChEBI" id="CHEBI:60657"/>
        <dbReference type="ChEBI" id="CHEBI:76079"/>
    </reaction>
    <physiologicalReaction direction="left-to-right" evidence="2">
        <dbReference type="Rhea" id="RHEA:40960"/>
    </physiologicalReaction>
</comment>
<comment type="subunit">
    <text evidence="2">Monomer.</text>
</comment>
<comment type="similarity">
    <text evidence="5">In the N-terminal section; belongs to the asparaginase 1 family.</text>
</comment>
<reference key="1">
    <citation type="journal article" date="2004" name="Genome Res.">
        <title>The status, quality, and expansion of the NIH full-length cDNA project: the Mammalian Gene Collection (MGC).</title>
        <authorList>
            <consortium name="The MGC Project Team"/>
        </authorList>
    </citation>
    <scope>NUCLEOTIDE SEQUENCE [LARGE SCALE MRNA]</scope>
</reference>
<reference key="2">
    <citation type="journal article" date="2010" name="Cell">
        <title>A tissue-specific atlas of mouse protein phosphorylation and expression.</title>
        <authorList>
            <person name="Huttlin E.L."/>
            <person name="Jedrychowski M.P."/>
            <person name="Elias J.E."/>
            <person name="Goswami T."/>
            <person name="Rad R."/>
            <person name="Beausoleil S.A."/>
            <person name="Villen J."/>
            <person name="Haas W."/>
            <person name="Sowa M.E."/>
            <person name="Gygi S.P."/>
        </authorList>
    </citation>
    <scope>PHOSPHORYLATION [LARGE SCALE ANALYSIS] AT SER-478</scope>
    <scope>IDENTIFICATION BY MASS SPECTROMETRY [LARGE SCALE ANALYSIS]</scope>
    <source>
        <tissue>Brown adipose tissue</tissue>
        <tissue>Kidney</tissue>
        <tissue>Liver</tissue>
    </source>
</reference>
<evidence type="ECO:0000250" key="1"/>
<evidence type="ECO:0000250" key="2">
    <source>
        <dbReference type="UniProtKB" id="O88202"/>
    </source>
</evidence>
<evidence type="ECO:0000255" key="3">
    <source>
        <dbReference type="PROSITE-ProRule" id="PRU01068"/>
    </source>
</evidence>
<evidence type="ECO:0000255" key="4">
    <source>
        <dbReference type="PROSITE-ProRule" id="PRU10100"/>
    </source>
</evidence>
<evidence type="ECO:0000305" key="5"/>
<evidence type="ECO:0007744" key="6">
    <source>
    </source>
</evidence>
<name>LPP60_MOUSE</name>
<feature type="chain" id="PRO_0000324164" description="60 kDa lysophospholipase">
    <location>
        <begin position="1"/>
        <end position="564"/>
    </location>
</feature>
<feature type="domain" description="Asparaginase/glutaminase" evidence="3">
    <location>
        <begin position="9"/>
        <end position="355"/>
    </location>
</feature>
<feature type="repeat" description="ANK 1">
    <location>
        <begin position="141"/>
        <end position="170"/>
    </location>
</feature>
<feature type="repeat" description="ANK 2">
    <location>
        <begin position="396"/>
        <end position="426"/>
    </location>
</feature>
<feature type="repeat" description="ANK 3">
    <location>
        <begin position="430"/>
        <end position="459"/>
    </location>
</feature>
<feature type="repeat" description="ANK 4">
    <location>
        <begin position="463"/>
        <end position="492"/>
    </location>
</feature>
<feature type="repeat" description="ANK 5">
    <location>
        <begin position="530"/>
        <end position="559"/>
    </location>
</feature>
<feature type="region of interest" description="Asparaginase">
    <location>
        <begin position="41"/>
        <end position="350"/>
    </location>
</feature>
<feature type="active site" description="Acyl-ester intermediate" evidence="4">
    <location>
        <position position="19"/>
    </location>
</feature>
<feature type="binding site" evidence="1">
    <location>
        <begin position="84"/>
        <end position="86"/>
    </location>
    <ligand>
        <name>substrate</name>
    </ligand>
</feature>
<feature type="binding site" evidence="1">
    <location>
        <begin position="116"/>
        <end position="117"/>
    </location>
    <ligand>
        <name>substrate</name>
    </ligand>
</feature>
<feature type="modified residue" description="Phosphoserine" evidence="6">
    <location>
        <position position="478"/>
    </location>
</feature>
<organism>
    <name type="scientific">Mus musculus</name>
    <name type="common">Mouse</name>
    <dbReference type="NCBI Taxonomy" id="10090"/>
    <lineage>
        <taxon>Eukaryota</taxon>
        <taxon>Metazoa</taxon>
        <taxon>Chordata</taxon>
        <taxon>Craniata</taxon>
        <taxon>Vertebrata</taxon>
        <taxon>Euteleostomi</taxon>
        <taxon>Mammalia</taxon>
        <taxon>Eutheria</taxon>
        <taxon>Euarchontoglires</taxon>
        <taxon>Glires</taxon>
        <taxon>Rodentia</taxon>
        <taxon>Myomorpha</taxon>
        <taxon>Muroidea</taxon>
        <taxon>Muridae</taxon>
        <taxon>Murinae</taxon>
        <taxon>Mus</taxon>
        <taxon>Mus</taxon>
    </lineage>
</organism>
<gene>
    <name type="primary">Aspg</name>
</gene>
<sequence length="564" mass="60595">MARAMGPERRLLAIYTGGTIGMRSEGGVLVPGRGLAAVLKTLHMFHDEEYAQAHSLPEDTLVLPPASPDQRIIYTVLECQPLFDSSDMTITEWVQIAQTIERHYAQYQGFVVIHGTDTMAFAASVLSFMLENLQKPVVLTGAQVPIHALWSDGRENLLGALLMAGQYVIPEVCLFFQNQLFRGNRTTKVDARRFAAFCSPNLPPLATVGADVTINRELVRKACGKSHLVVHSSMEPDVGLLRLYPGIPASLVRTFLQPPLKGVVMETFGSGNGPTKPDLLQELRVAAEQGLIIVNCTHCLQGAVTSDYASGMAMAGAGIVSGFDMTSEAALAKLSYVLGQPGLSLNDRKKLLAKDLRGEMTLPATDVLLQDGMLGCRVAWLLSMNGSQEADTMKDVLLPGLALAAAHAGDLDTLQAFVELDRDLNLKDYSGQTPLHVAARRGHAAVVTMLLQRGADVDARNEDGQSPLLLAVRGRHQSVIGLLRAAGARLSPQELEDVGTELCRLASRGDSEGLRAWWQAGADLGQPDYDGHCALQVAEAAGNADVVALLQSFKDSVCAQPQPH</sequence>
<proteinExistence type="evidence at protein level"/>